<gene>
    <name evidence="1" type="primary">bioB</name>
    <name type="ordered locus">PERMA_1355</name>
</gene>
<sequence length="336" mass="37308">MEDFIKGLAERVLEGEKLSKEDGLKILSIPDEYLDLLVQEASKVREAVFGDEVEFCSLINAKNGACSEDCSFCAQSSKYPTPINAYGLVPKKELVEGAQKAVSIKANRYCIVTSGKRATKEEVEQIADAVREITENLPVRVCVSIGTVDEEDLKLLKDSGVDRVNHNLETSERHFKNIVTTHSYKERLETIKTVQKVGLSTCTGGIFGIGETDEDIVDLASVYRELNVNSIPMNFLIPIPGTPLEGNKQLTPQRCLKIISLFKLFNPQAELRLCGGREINLREYHDTAMEIANCVMAGGYLTRAGRAPGKDEEMVRRLGRKLITGRDLFSKYKTAV</sequence>
<feature type="chain" id="PRO_0000381524" description="Biotin synthase">
    <location>
        <begin position="1"/>
        <end position="336"/>
    </location>
</feature>
<feature type="domain" description="Radical SAM core" evidence="2">
    <location>
        <begin position="48"/>
        <end position="277"/>
    </location>
</feature>
<feature type="binding site" evidence="1">
    <location>
        <position position="66"/>
    </location>
    <ligand>
        <name>[4Fe-4S] cluster</name>
        <dbReference type="ChEBI" id="CHEBI:49883"/>
        <note>4Fe-4S-S-AdoMet</note>
    </ligand>
</feature>
<feature type="binding site" evidence="1">
    <location>
        <position position="70"/>
    </location>
    <ligand>
        <name>[4Fe-4S] cluster</name>
        <dbReference type="ChEBI" id="CHEBI:49883"/>
        <note>4Fe-4S-S-AdoMet</note>
    </ligand>
</feature>
<feature type="binding site" evidence="1">
    <location>
        <position position="73"/>
    </location>
    <ligand>
        <name>[4Fe-4S] cluster</name>
        <dbReference type="ChEBI" id="CHEBI:49883"/>
        <note>4Fe-4S-S-AdoMet</note>
    </ligand>
</feature>
<feature type="binding site" evidence="1">
    <location>
        <position position="110"/>
    </location>
    <ligand>
        <name>[2Fe-2S] cluster</name>
        <dbReference type="ChEBI" id="CHEBI:190135"/>
    </ligand>
</feature>
<feature type="binding site" evidence="1">
    <location>
        <position position="142"/>
    </location>
    <ligand>
        <name>[2Fe-2S] cluster</name>
        <dbReference type="ChEBI" id="CHEBI:190135"/>
    </ligand>
</feature>
<feature type="binding site" evidence="1">
    <location>
        <position position="202"/>
    </location>
    <ligand>
        <name>[2Fe-2S] cluster</name>
        <dbReference type="ChEBI" id="CHEBI:190135"/>
    </ligand>
</feature>
<feature type="binding site" evidence="1">
    <location>
        <position position="272"/>
    </location>
    <ligand>
        <name>[2Fe-2S] cluster</name>
        <dbReference type="ChEBI" id="CHEBI:190135"/>
    </ligand>
</feature>
<organism>
    <name type="scientific">Persephonella marina (strain DSM 14350 / EX-H1)</name>
    <dbReference type="NCBI Taxonomy" id="123214"/>
    <lineage>
        <taxon>Bacteria</taxon>
        <taxon>Pseudomonadati</taxon>
        <taxon>Aquificota</taxon>
        <taxon>Aquificia</taxon>
        <taxon>Aquificales</taxon>
        <taxon>Hydrogenothermaceae</taxon>
        <taxon>Persephonella</taxon>
    </lineage>
</organism>
<keyword id="KW-0001">2Fe-2S</keyword>
<keyword id="KW-0004">4Fe-4S</keyword>
<keyword id="KW-0093">Biotin biosynthesis</keyword>
<keyword id="KW-0408">Iron</keyword>
<keyword id="KW-0411">Iron-sulfur</keyword>
<keyword id="KW-0479">Metal-binding</keyword>
<keyword id="KW-1185">Reference proteome</keyword>
<keyword id="KW-0949">S-adenosyl-L-methionine</keyword>
<keyword id="KW-0808">Transferase</keyword>
<comment type="function">
    <text evidence="1">Catalyzes the conversion of dethiobiotin (DTB) to biotin by the insertion of a sulfur atom into dethiobiotin via a radical-based mechanism.</text>
</comment>
<comment type="catalytic activity">
    <reaction evidence="1">
        <text>(4R,5S)-dethiobiotin + (sulfur carrier)-SH + 2 reduced [2Fe-2S]-[ferredoxin] + 2 S-adenosyl-L-methionine = (sulfur carrier)-H + biotin + 2 5'-deoxyadenosine + 2 L-methionine + 2 oxidized [2Fe-2S]-[ferredoxin]</text>
        <dbReference type="Rhea" id="RHEA:22060"/>
        <dbReference type="Rhea" id="RHEA-COMP:10000"/>
        <dbReference type="Rhea" id="RHEA-COMP:10001"/>
        <dbReference type="Rhea" id="RHEA-COMP:14737"/>
        <dbReference type="Rhea" id="RHEA-COMP:14739"/>
        <dbReference type="ChEBI" id="CHEBI:17319"/>
        <dbReference type="ChEBI" id="CHEBI:29917"/>
        <dbReference type="ChEBI" id="CHEBI:33737"/>
        <dbReference type="ChEBI" id="CHEBI:33738"/>
        <dbReference type="ChEBI" id="CHEBI:57586"/>
        <dbReference type="ChEBI" id="CHEBI:57844"/>
        <dbReference type="ChEBI" id="CHEBI:59789"/>
        <dbReference type="ChEBI" id="CHEBI:64428"/>
        <dbReference type="ChEBI" id="CHEBI:149473"/>
        <dbReference type="EC" id="2.8.1.6"/>
    </reaction>
</comment>
<comment type="cofactor">
    <cofactor evidence="1">
        <name>[4Fe-4S] cluster</name>
        <dbReference type="ChEBI" id="CHEBI:49883"/>
    </cofactor>
    <text evidence="1">Binds 1 [4Fe-4S] cluster. The cluster is coordinated with 3 cysteines and an exchangeable S-adenosyl-L-methionine.</text>
</comment>
<comment type="cofactor">
    <cofactor evidence="1">
        <name>[2Fe-2S] cluster</name>
        <dbReference type="ChEBI" id="CHEBI:190135"/>
    </cofactor>
    <text evidence="1">Binds 1 [2Fe-2S] cluster. The cluster is coordinated with 3 cysteines and 1 arginine.</text>
</comment>
<comment type="pathway">
    <text evidence="1">Cofactor biosynthesis; biotin biosynthesis; biotin from 7,8-diaminononanoate: step 2/2.</text>
</comment>
<comment type="subunit">
    <text evidence="1">Homodimer.</text>
</comment>
<comment type="similarity">
    <text evidence="1">Belongs to the radical SAM superfamily. Biotin synthase family.</text>
</comment>
<reference key="1">
    <citation type="journal article" date="2009" name="J. Bacteriol.">
        <title>Complete and draft genome sequences of six members of the Aquificales.</title>
        <authorList>
            <person name="Reysenbach A.-L."/>
            <person name="Hamamura N."/>
            <person name="Podar M."/>
            <person name="Griffiths E."/>
            <person name="Ferreira S."/>
            <person name="Hochstein R."/>
            <person name="Heidelberg J."/>
            <person name="Johnson J."/>
            <person name="Mead D."/>
            <person name="Pohorille A."/>
            <person name="Sarmiento M."/>
            <person name="Schweighofer K."/>
            <person name="Seshadri R."/>
            <person name="Voytek M.A."/>
        </authorList>
    </citation>
    <scope>NUCLEOTIDE SEQUENCE [LARGE SCALE GENOMIC DNA]</scope>
    <source>
        <strain>DSM 14350 / EX-H1</strain>
    </source>
</reference>
<dbReference type="EC" id="2.8.1.6" evidence="1"/>
<dbReference type="EMBL" id="CP001230">
    <property type="protein sequence ID" value="ACO03951.1"/>
    <property type="molecule type" value="Genomic_DNA"/>
</dbReference>
<dbReference type="RefSeq" id="WP_012676190.1">
    <property type="nucleotide sequence ID" value="NC_012440.1"/>
</dbReference>
<dbReference type="SMR" id="C0QR28"/>
<dbReference type="STRING" id="123214.PERMA_1355"/>
<dbReference type="PaxDb" id="123214-PERMA_1355"/>
<dbReference type="KEGG" id="pmx:PERMA_1355"/>
<dbReference type="eggNOG" id="COG0502">
    <property type="taxonomic scope" value="Bacteria"/>
</dbReference>
<dbReference type="HOGENOM" id="CLU_033172_2_1_0"/>
<dbReference type="OrthoDB" id="9786826at2"/>
<dbReference type="UniPathway" id="UPA00078">
    <property type="reaction ID" value="UER00162"/>
</dbReference>
<dbReference type="Proteomes" id="UP000001366">
    <property type="component" value="Chromosome"/>
</dbReference>
<dbReference type="GO" id="GO:0051537">
    <property type="term" value="F:2 iron, 2 sulfur cluster binding"/>
    <property type="evidence" value="ECO:0007669"/>
    <property type="project" value="UniProtKB-KW"/>
</dbReference>
<dbReference type="GO" id="GO:0051539">
    <property type="term" value="F:4 iron, 4 sulfur cluster binding"/>
    <property type="evidence" value="ECO:0007669"/>
    <property type="project" value="UniProtKB-KW"/>
</dbReference>
<dbReference type="GO" id="GO:0004076">
    <property type="term" value="F:biotin synthase activity"/>
    <property type="evidence" value="ECO:0007669"/>
    <property type="project" value="UniProtKB-UniRule"/>
</dbReference>
<dbReference type="GO" id="GO:0005506">
    <property type="term" value="F:iron ion binding"/>
    <property type="evidence" value="ECO:0007669"/>
    <property type="project" value="UniProtKB-UniRule"/>
</dbReference>
<dbReference type="GO" id="GO:0009102">
    <property type="term" value="P:biotin biosynthetic process"/>
    <property type="evidence" value="ECO:0007669"/>
    <property type="project" value="UniProtKB-UniRule"/>
</dbReference>
<dbReference type="CDD" id="cd01335">
    <property type="entry name" value="Radical_SAM"/>
    <property type="match status" value="1"/>
</dbReference>
<dbReference type="FunFam" id="3.20.20.70:FF:000026">
    <property type="entry name" value="Biotin synthase"/>
    <property type="match status" value="1"/>
</dbReference>
<dbReference type="Gene3D" id="3.20.20.70">
    <property type="entry name" value="Aldolase class I"/>
    <property type="match status" value="1"/>
</dbReference>
<dbReference type="HAMAP" id="MF_01694">
    <property type="entry name" value="BioB"/>
    <property type="match status" value="1"/>
</dbReference>
<dbReference type="InterPro" id="IPR013785">
    <property type="entry name" value="Aldolase_TIM"/>
</dbReference>
<dbReference type="InterPro" id="IPR010722">
    <property type="entry name" value="BATS_dom"/>
</dbReference>
<dbReference type="InterPro" id="IPR002684">
    <property type="entry name" value="Biotin_synth/BioAB"/>
</dbReference>
<dbReference type="InterPro" id="IPR024177">
    <property type="entry name" value="Biotin_synthase"/>
</dbReference>
<dbReference type="InterPro" id="IPR006638">
    <property type="entry name" value="Elp3/MiaA/NifB-like_rSAM"/>
</dbReference>
<dbReference type="InterPro" id="IPR007197">
    <property type="entry name" value="rSAM"/>
</dbReference>
<dbReference type="NCBIfam" id="TIGR00433">
    <property type="entry name" value="bioB"/>
    <property type="match status" value="1"/>
</dbReference>
<dbReference type="PANTHER" id="PTHR22976">
    <property type="entry name" value="BIOTIN SYNTHASE"/>
    <property type="match status" value="1"/>
</dbReference>
<dbReference type="PANTHER" id="PTHR22976:SF2">
    <property type="entry name" value="BIOTIN SYNTHASE, MITOCHONDRIAL"/>
    <property type="match status" value="1"/>
</dbReference>
<dbReference type="Pfam" id="PF06968">
    <property type="entry name" value="BATS"/>
    <property type="match status" value="1"/>
</dbReference>
<dbReference type="Pfam" id="PF04055">
    <property type="entry name" value="Radical_SAM"/>
    <property type="match status" value="1"/>
</dbReference>
<dbReference type="PIRSF" id="PIRSF001619">
    <property type="entry name" value="Biotin_synth"/>
    <property type="match status" value="1"/>
</dbReference>
<dbReference type="SFLD" id="SFLDG01278">
    <property type="entry name" value="biotin_synthase_like"/>
    <property type="match status" value="1"/>
</dbReference>
<dbReference type="SFLD" id="SFLDS00029">
    <property type="entry name" value="Radical_SAM"/>
    <property type="match status" value="1"/>
</dbReference>
<dbReference type="SMART" id="SM00876">
    <property type="entry name" value="BATS"/>
    <property type="match status" value="1"/>
</dbReference>
<dbReference type="SMART" id="SM00729">
    <property type="entry name" value="Elp3"/>
    <property type="match status" value="1"/>
</dbReference>
<dbReference type="SUPFAM" id="SSF102114">
    <property type="entry name" value="Radical SAM enzymes"/>
    <property type="match status" value="1"/>
</dbReference>
<dbReference type="PROSITE" id="PS51918">
    <property type="entry name" value="RADICAL_SAM"/>
    <property type="match status" value="1"/>
</dbReference>
<proteinExistence type="inferred from homology"/>
<name>BIOB_PERMH</name>
<protein>
    <recommendedName>
        <fullName evidence="1">Biotin synthase</fullName>
        <ecNumber evidence="1">2.8.1.6</ecNumber>
    </recommendedName>
</protein>
<evidence type="ECO:0000255" key="1">
    <source>
        <dbReference type="HAMAP-Rule" id="MF_01694"/>
    </source>
</evidence>
<evidence type="ECO:0000255" key="2">
    <source>
        <dbReference type="PROSITE-ProRule" id="PRU01266"/>
    </source>
</evidence>
<accession>C0QR28</accession>